<evidence type="ECO:0000250" key="1">
    <source>
        <dbReference type="UniProtKB" id="P36508"/>
    </source>
</evidence>
<evidence type="ECO:0000255" key="2">
    <source>
        <dbReference type="PROSITE-ProRule" id="PRU00042"/>
    </source>
</evidence>
<evidence type="ECO:0000256" key="3">
    <source>
        <dbReference type="SAM" id="MobiDB-lite"/>
    </source>
</evidence>
<evidence type="ECO:0000303" key="4">
    <source>
    </source>
</evidence>
<evidence type="ECO:0000305" key="5"/>
<protein>
    <recommendedName>
        <fullName>Zinc finger protein 76</fullName>
    </recommendedName>
    <alternativeName>
        <fullName>Zinc finger protein 523</fullName>
    </alternativeName>
</protein>
<reference key="1">
    <citation type="journal article" date="2005" name="Science">
        <title>The transcriptional landscape of the mammalian genome.</title>
        <authorList>
            <person name="Carninci P."/>
            <person name="Kasukawa T."/>
            <person name="Katayama S."/>
            <person name="Gough J."/>
            <person name="Frith M.C."/>
            <person name="Maeda N."/>
            <person name="Oyama R."/>
            <person name="Ravasi T."/>
            <person name="Lenhard B."/>
            <person name="Wells C."/>
            <person name="Kodzius R."/>
            <person name="Shimokawa K."/>
            <person name="Bajic V.B."/>
            <person name="Brenner S.E."/>
            <person name="Batalov S."/>
            <person name="Forrest A.R."/>
            <person name="Zavolan M."/>
            <person name="Davis M.J."/>
            <person name="Wilming L.G."/>
            <person name="Aidinis V."/>
            <person name="Allen J.E."/>
            <person name="Ambesi-Impiombato A."/>
            <person name="Apweiler R."/>
            <person name="Aturaliya R.N."/>
            <person name="Bailey T.L."/>
            <person name="Bansal M."/>
            <person name="Baxter L."/>
            <person name="Beisel K.W."/>
            <person name="Bersano T."/>
            <person name="Bono H."/>
            <person name="Chalk A.M."/>
            <person name="Chiu K.P."/>
            <person name="Choudhary V."/>
            <person name="Christoffels A."/>
            <person name="Clutterbuck D.R."/>
            <person name="Crowe M.L."/>
            <person name="Dalla E."/>
            <person name="Dalrymple B.P."/>
            <person name="de Bono B."/>
            <person name="Della Gatta G."/>
            <person name="di Bernardo D."/>
            <person name="Down T."/>
            <person name="Engstrom P."/>
            <person name="Fagiolini M."/>
            <person name="Faulkner G."/>
            <person name="Fletcher C.F."/>
            <person name="Fukushima T."/>
            <person name="Furuno M."/>
            <person name="Futaki S."/>
            <person name="Gariboldi M."/>
            <person name="Georgii-Hemming P."/>
            <person name="Gingeras T.R."/>
            <person name="Gojobori T."/>
            <person name="Green R.E."/>
            <person name="Gustincich S."/>
            <person name="Harbers M."/>
            <person name="Hayashi Y."/>
            <person name="Hensch T.K."/>
            <person name="Hirokawa N."/>
            <person name="Hill D."/>
            <person name="Huminiecki L."/>
            <person name="Iacono M."/>
            <person name="Ikeo K."/>
            <person name="Iwama A."/>
            <person name="Ishikawa T."/>
            <person name="Jakt M."/>
            <person name="Kanapin A."/>
            <person name="Katoh M."/>
            <person name="Kawasawa Y."/>
            <person name="Kelso J."/>
            <person name="Kitamura H."/>
            <person name="Kitano H."/>
            <person name="Kollias G."/>
            <person name="Krishnan S.P."/>
            <person name="Kruger A."/>
            <person name="Kummerfeld S.K."/>
            <person name="Kurochkin I.V."/>
            <person name="Lareau L.F."/>
            <person name="Lazarevic D."/>
            <person name="Lipovich L."/>
            <person name="Liu J."/>
            <person name="Liuni S."/>
            <person name="McWilliam S."/>
            <person name="Madan Babu M."/>
            <person name="Madera M."/>
            <person name="Marchionni L."/>
            <person name="Matsuda H."/>
            <person name="Matsuzawa S."/>
            <person name="Miki H."/>
            <person name="Mignone F."/>
            <person name="Miyake S."/>
            <person name="Morris K."/>
            <person name="Mottagui-Tabar S."/>
            <person name="Mulder N."/>
            <person name="Nakano N."/>
            <person name="Nakauchi H."/>
            <person name="Ng P."/>
            <person name="Nilsson R."/>
            <person name="Nishiguchi S."/>
            <person name="Nishikawa S."/>
            <person name="Nori F."/>
            <person name="Ohara O."/>
            <person name="Okazaki Y."/>
            <person name="Orlando V."/>
            <person name="Pang K.C."/>
            <person name="Pavan W.J."/>
            <person name="Pavesi G."/>
            <person name="Pesole G."/>
            <person name="Petrovsky N."/>
            <person name="Piazza S."/>
            <person name="Reed J."/>
            <person name="Reid J.F."/>
            <person name="Ring B.Z."/>
            <person name="Ringwald M."/>
            <person name="Rost B."/>
            <person name="Ruan Y."/>
            <person name="Salzberg S.L."/>
            <person name="Sandelin A."/>
            <person name="Schneider C."/>
            <person name="Schoenbach C."/>
            <person name="Sekiguchi K."/>
            <person name="Semple C.A."/>
            <person name="Seno S."/>
            <person name="Sessa L."/>
            <person name="Sheng Y."/>
            <person name="Shibata Y."/>
            <person name="Shimada H."/>
            <person name="Shimada K."/>
            <person name="Silva D."/>
            <person name="Sinclair B."/>
            <person name="Sperling S."/>
            <person name="Stupka E."/>
            <person name="Sugiura K."/>
            <person name="Sultana R."/>
            <person name="Takenaka Y."/>
            <person name="Taki K."/>
            <person name="Tammoja K."/>
            <person name="Tan S.L."/>
            <person name="Tang S."/>
            <person name="Taylor M.S."/>
            <person name="Tegner J."/>
            <person name="Teichmann S.A."/>
            <person name="Ueda H.R."/>
            <person name="van Nimwegen E."/>
            <person name="Verardo R."/>
            <person name="Wei C.L."/>
            <person name="Yagi K."/>
            <person name="Yamanishi H."/>
            <person name="Zabarovsky E."/>
            <person name="Zhu S."/>
            <person name="Zimmer A."/>
            <person name="Hide W."/>
            <person name="Bult C."/>
            <person name="Grimmond S.M."/>
            <person name="Teasdale R.D."/>
            <person name="Liu E.T."/>
            <person name="Brusic V."/>
            <person name="Quackenbush J."/>
            <person name="Wahlestedt C."/>
            <person name="Mattick J.S."/>
            <person name="Hume D.A."/>
            <person name="Kai C."/>
            <person name="Sasaki D."/>
            <person name="Tomaru Y."/>
            <person name="Fukuda S."/>
            <person name="Kanamori-Katayama M."/>
            <person name="Suzuki M."/>
            <person name="Aoki J."/>
            <person name="Arakawa T."/>
            <person name="Iida J."/>
            <person name="Imamura K."/>
            <person name="Itoh M."/>
            <person name="Kato T."/>
            <person name="Kawaji H."/>
            <person name="Kawagashira N."/>
            <person name="Kawashima T."/>
            <person name="Kojima M."/>
            <person name="Kondo S."/>
            <person name="Konno H."/>
            <person name="Nakano K."/>
            <person name="Ninomiya N."/>
            <person name="Nishio T."/>
            <person name="Okada M."/>
            <person name="Plessy C."/>
            <person name="Shibata K."/>
            <person name="Shiraki T."/>
            <person name="Suzuki S."/>
            <person name="Tagami M."/>
            <person name="Waki K."/>
            <person name="Watahiki A."/>
            <person name="Okamura-Oho Y."/>
            <person name="Suzuki H."/>
            <person name="Kawai J."/>
            <person name="Hayashizaki Y."/>
        </authorList>
    </citation>
    <scope>NUCLEOTIDE SEQUENCE [LARGE SCALE MRNA] (ISOFORM 1)</scope>
    <source>
        <strain>C57BL/6J</strain>
    </source>
</reference>
<reference key="2">
    <citation type="journal article" date="2009" name="PLoS Biol.">
        <title>Lineage-specific biology revealed by a finished genome assembly of the mouse.</title>
        <authorList>
            <person name="Church D.M."/>
            <person name="Goodstadt L."/>
            <person name="Hillier L.W."/>
            <person name="Zody M.C."/>
            <person name="Goldstein S."/>
            <person name="She X."/>
            <person name="Bult C.J."/>
            <person name="Agarwala R."/>
            <person name="Cherry J.L."/>
            <person name="DiCuccio M."/>
            <person name="Hlavina W."/>
            <person name="Kapustin Y."/>
            <person name="Meric P."/>
            <person name="Maglott D."/>
            <person name="Birtle Z."/>
            <person name="Marques A.C."/>
            <person name="Graves T."/>
            <person name="Zhou S."/>
            <person name="Teague B."/>
            <person name="Potamousis K."/>
            <person name="Churas C."/>
            <person name="Place M."/>
            <person name="Herschleb J."/>
            <person name="Runnheim R."/>
            <person name="Forrest D."/>
            <person name="Amos-Landgraf J."/>
            <person name="Schwartz D.C."/>
            <person name="Cheng Z."/>
            <person name="Lindblad-Toh K."/>
            <person name="Eichler E.E."/>
            <person name="Ponting C.P."/>
        </authorList>
    </citation>
    <scope>NUCLEOTIDE SEQUENCE [LARGE SCALE GENOMIC DNA]</scope>
    <source>
        <strain>C57BL/6J</strain>
    </source>
</reference>
<reference key="3">
    <citation type="journal article" date="2004" name="Genome Res.">
        <title>The status, quality, and expansion of the NIH full-length cDNA project: the Mammalian Gene Collection (MGC).</title>
        <authorList>
            <consortium name="The MGC Project Team"/>
        </authorList>
    </citation>
    <scope>NUCLEOTIDE SEQUENCE [LARGE SCALE MRNA] (ISOFORMS 1 AND 2)</scope>
    <source>
        <strain>C57BL/6J</strain>
        <tissue>Brain</tissue>
    </source>
</reference>
<feature type="chain" id="PRO_0000353096" description="Zinc finger protein 76">
    <location>
        <begin position="1"/>
        <end position="568"/>
    </location>
</feature>
<feature type="repeat" description="1">
    <location>
        <begin position="34"/>
        <end position="45"/>
    </location>
</feature>
<feature type="repeat" description="2">
    <location>
        <begin position="62"/>
        <end position="73"/>
    </location>
</feature>
<feature type="repeat" description="3">
    <location>
        <begin position="88"/>
        <end position="99"/>
    </location>
</feature>
<feature type="zinc finger region" description="C2H2-type 1" evidence="2">
    <location>
        <begin position="165"/>
        <end position="189"/>
    </location>
</feature>
<feature type="zinc finger region" description="C2H2-type 2" evidence="2">
    <location>
        <begin position="195"/>
        <end position="219"/>
    </location>
</feature>
<feature type="zinc finger region" description="C2H2-type 3" evidence="2">
    <location>
        <begin position="225"/>
        <end position="249"/>
    </location>
</feature>
<feature type="zinc finger region" description="C2H2-type 4" evidence="2">
    <location>
        <begin position="255"/>
        <end position="279"/>
    </location>
</feature>
<feature type="zinc finger region" description="C2H2-type 5" evidence="2">
    <location>
        <begin position="285"/>
        <end position="309"/>
    </location>
</feature>
<feature type="zinc finger region" description="C2H2-type 6" evidence="2">
    <location>
        <begin position="315"/>
        <end position="339"/>
    </location>
</feature>
<feature type="zinc finger region" description="C2H2-type 7" evidence="2">
    <location>
        <begin position="345"/>
        <end position="368"/>
    </location>
</feature>
<feature type="region of interest" description="3 X 12 AA approximate repeats">
    <location>
        <begin position="34"/>
        <end position="99"/>
    </location>
</feature>
<feature type="region of interest" description="Disordered" evidence="3">
    <location>
        <begin position="365"/>
        <end position="402"/>
    </location>
</feature>
<feature type="compositionally biased region" description="Low complexity" evidence="3">
    <location>
        <begin position="379"/>
        <end position="395"/>
    </location>
</feature>
<feature type="cross-link" description="Glycyl lysine isopeptide (Lys-Gly) (interchain with G-Cter in SUMO2)" evidence="1">
    <location>
        <position position="24"/>
    </location>
</feature>
<feature type="splice variant" id="VSP_035628" description="In isoform 2." evidence="4">
    <original>EKPYV</original>
    <variation>GPAGV</variation>
    <location>
        <begin position="312"/>
        <end position="316"/>
    </location>
</feature>
<feature type="splice variant" id="VSP_035629" description="In isoform 2." evidence="4">
    <location>
        <begin position="317"/>
        <end position="568"/>
    </location>
</feature>
<gene>
    <name type="primary">Znf76</name>
    <name type="synonym">Zfp523</name>
</gene>
<keyword id="KW-0025">Alternative splicing</keyword>
<keyword id="KW-0238">DNA-binding</keyword>
<keyword id="KW-1017">Isopeptide bond</keyword>
<keyword id="KW-0479">Metal-binding</keyword>
<keyword id="KW-0539">Nucleus</keyword>
<keyword id="KW-1185">Reference proteome</keyword>
<keyword id="KW-0677">Repeat</keyword>
<keyword id="KW-0804">Transcription</keyword>
<keyword id="KW-0805">Transcription regulation</keyword>
<keyword id="KW-0832">Ubl conjugation</keyword>
<keyword id="KW-0862">Zinc</keyword>
<keyword id="KW-0863">Zinc-finger</keyword>
<dbReference type="EMBL" id="AK028222">
    <property type="protein sequence ID" value="BAC25822.1"/>
    <property type="molecule type" value="mRNA"/>
</dbReference>
<dbReference type="EMBL" id="CT009658">
    <property type="status" value="NOT_ANNOTATED_CDS"/>
    <property type="molecule type" value="Genomic_DNA"/>
</dbReference>
<dbReference type="EMBL" id="BC058346">
    <property type="protein sequence ID" value="AAH58346.1"/>
    <property type="molecule type" value="mRNA"/>
</dbReference>
<dbReference type="EMBL" id="BC060611">
    <property type="protein sequence ID" value="AAH60611.1"/>
    <property type="molecule type" value="mRNA"/>
</dbReference>
<dbReference type="CCDS" id="CCDS28573.1">
    <molecule id="Q8BMU0-1"/>
</dbReference>
<dbReference type="RefSeq" id="NP_766205.1">
    <molecule id="Q8BMU0-1"/>
    <property type="nucleotide sequence ID" value="NM_172617.3"/>
</dbReference>
<dbReference type="RefSeq" id="XP_006524155.1">
    <property type="nucleotide sequence ID" value="XM_006524092.3"/>
</dbReference>
<dbReference type="RefSeq" id="XP_017172898.1">
    <property type="nucleotide sequence ID" value="XM_017317409.1"/>
</dbReference>
<dbReference type="SMR" id="Q8BMU0"/>
<dbReference type="BioGRID" id="230298">
    <property type="interactions" value="1"/>
</dbReference>
<dbReference type="FunCoup" id="Q8BMU0">
    <property type="interactions" value="1609"/>
</dbReference>
<dbReference type="STRING" id="10090.ENSMUSP00000073226"/>
<dbReference type="iPTMnet" id="Q8BMU0"/>
<dbReference type="PhosphoSitePlus" id="Q8BMU0"/>
<dbReference type="PaxDb" id="10090-ENSMUSP00000002318"/>
<dbReference type="PeptideAtlas" id="Q8BMU0"/>
<dbReference type="ProteomicsDB" id="275098">
    <molecule id="Q8BMU0-1"/>
</dbReference>
<dbReference type="ProteomicsDB" id="275099">
    <molecule id="Q8BMU0-2"/>
</dbReference>
<dbReference type="Antibodypedia" id="15181">
    <property type="antibodies" value="129 antibodies from 26 providers"/>
</dbReference>
<dbReference type="DNASU" id="224656"/>
<dbReference type="Ensembl" id="ENSMUST00000002318.8">
    <molecule id="Q8BMU0-1"/>
    <property type="protein sequence ID" value="ENSMUSP00000002318.2"/>
    <property type="gene ID" value="ENSMUSG00000024220.15"/>
</dbReference>
<dbReference type="Ensembl" id="ENSMUST00000073534.10">
    <molecule id="Q8BMU0-1"/>
    <property type="protein sequence ID" value="ENSMUSP00000073226.3"/>
    <property type="gene ID" value="ENSMUSG00000024220.15"/>
</dbReference>
<dbReference type="Ensembl" id="ENSMUST00000233613.2">
    <molecule id="Q8BMU0-1"/>
    <property type="protein sequence ID" value="ENSMUSP00000156638.2"/>
    <property type="gene ID" value="ENSMUSG00000024220.15"/>
</dbReference>
<dbReference type="GeneID" id="224656"/>
<dbReference type="KEGG" id="mmu:224656"/>
<dbReference type="UCSC" id="uc008bqg.2">
    <molecule id="Q8BMU0-1"/>
    <property type="organism name" value="mouse"/>
</dbReference>
<dbReference type="AGR" id="MGI:2687278"/>
<dbReference type="CTD" id="224656"/>
<dbReference type="MGI" id="MGI:2687278">
    <property type="gene designation" value="Zfp523"/>
</dbReference>
<dbReference type="VEuPathDB" id="HostDB:ENSMUSG00000024220"/>
<dbReference type="eggNOG" id="KOG1721">
    <property type="taxonomic scope" value="Eukaryota"/>
</dbReference>
<dbReference type="GeneTree" id="ENSGT00940000160911"/>
<dbReference type="HOGENOM" id="CLU_027168_0_0_1"/>
<dbReference type="InParanoid" id="Q8BMU0"/>
<dbReference type="OMA" id="HCKPYSC"/>
<dbReference type="OrthoDB" id="6077919at2759"/>
<dbReference type="PhylomeDB" id="Q8BMU0"/>
<dbReference type="TreeFam" id="TF333498"/>
<dbReference type="BioGRID-ORCS" id="224656">
    <property type="hits" value="3 hits in 78 CRISPR screens"/>
</dbReference>
<dbReference type="ChiTaRS" id="Zfp523">
    <property type="organism name" value="mouse"/>
</dbReference>
<dbReference type="PRO" id="PR:Q8BMU0"/>
<dbReference type="Proteomes" id="UP000000589">
    <property type="component" value="Chromosome 17"/>
</dbReference>
<dbReference type="RNAct" id="Q8BMU0">
    <property type="molecule type" value="protein"/>
</dbReference>
<dbReference type="Bgee" id="ENSMUSG00000024220">
    <property type="expression patterns" value="Expressed in interventricular septum and 228 other cell types or tissues"/>
</dbReference>
<dbReference type="ExpressionAtlas" id="Q8BMU0">
    <property type="expression patterns" value="baseline and differential"/>
</dbReference>
<dbReference type="GO" id="GO:0005634">
    <property type="term" value="C:nucleus"/>
    <property type="evidence" value="ECO:0007669"/>
    <property type="project" value="UniProtKB-SubCell"/>
</dbReference>
<dbReference type="GO" id="GO:0001228">
    <property type="term" value="F:DNA-binding transcription activator activity, RNA polymerase II-specific"/>
    <property type="evidence" value="ECO:0007669"/>
    <property type="project" value="Ensembl"/>
</dbReference>
<dbReference type="GO" id="GO:1990837">
    <property type="term" value="F:sequence-specific double-stranded DNA binding"/>
    <property type="evidence" value="ECO:0007669"/>
    <property type="project" value="Ensembl"/>
</dbReference>
<dbReference type="GO" id="GO:0008270">
    <property type="term" value="F:zinc ion binding"/>
    <property type="evidence" value="ECO:0007669"/>
    <property type="project" value="UniProtKB-KW"/>
</dbReference>
<dbReference type="FunFam" id="3.30.160.60:FF:004334">
    <property type="match status" value="1"/>
</dbReference>
<dbReference type="FunFam" id="3.30.160.60:FF:000071">
    <property type="entry name" value="Putative zinc finger protein 143"/>
    <property type="match status" value="1"/>
</dbReference>
<dbReference type="FunFam" id="3.30.160.60:FF:000125">
    <property type="entry name" value="Putative zinc finger protein 143"/>
    <property type="match status" value="1"/>
</dbReference>
<dbReference type="FunFam" id="3.30.160.60:FF:000137">
    <property type="entry name" value="Putative zinc finger protein 143"/>
    <property type="match status" value="1"/>
</dbReference>
<dbReference type="FunFam" id="3.30.160.60:FF:000142">
    <property type="entry name" value="Putative zinc finger protein 143"/>
    <property type="match status" value="1"/>
</dbReference>
<dbReference type="FunFam" id="3.30.160.60:FF:000072">
    <property type="entry name" value="zinc finger protein 143 isoform X1"/>
    <property type="match status" value="1"/>
</dbReference>
<dbReference type="FunFam" id="3.30.160.60:FF:000236">
    <property type="entry name" value="zinc finger protein 143 isoform X1"/>
    <property type="match status" value="1"/>
</dbReference>
<dbReference type="Gene3D" id="3.30.160.60">
    <property type="entry name" value="Classic Zinc Finger"/>
    <property type="match status" value="7"/>
</dbReference>
<dbReference type="InterPro" id="IPR036236">
    <property type="entry name" value="Znf_C2H2_sf"/>
</dbReference>
<dbReference type="InterPro" id="IPR013087">
    <property type="entry name" value="Znf_C2H2_type"/>
</dbReference>
<dbReference type="PANTHER" id="PTHR14003">
    <property type="entry name" value="TRANSCRIPTIONAL REPRESSOR PROTEIN YY"/>
    <property type="match status" value="1"/>
</dbReference>
<dbReference type="PANTHER" id="PTHR14003:SF23">
    <property type="entry name" value="ZINC FINGER PROTEIN 143"/>
    <property type="match status" value="1"/>
</dbReference>
<dbReference type="Pfam" id="PF00096">
    <property type="entry name" value="zf-C2H2"/>
    <property type="match status" value="5"/>
</dbReference>
<dbReference type="SMART" id="SM00355">
    <property type="entry name" value="ZnF_C2H2"/>
    <property type="match status" value="7"/>
</dbReference>
<dbReference type="SUPFAM" id="SSF57667">
    <property type="entry name" value="beta-beta-alpha zinc fingers"/>
    <property type="match status" value="4"/>
</dbReference>
<dbReference type="PROSITE" id="PS00028">
    <property type="entry name" value="ZINC_FINGER_C2H2_1"/>
    <property type="match status" value="7"/>
</dbReference>
<dbReference type="PROSITE" id="PS50157">
    <property type="entry name" value="ZINC_FINGER_C2H2_2"/>
    <property type="match status" value="7"/>
</dbReference>
<organism>
    <name type="scientific">Mus musculus</name>
    <name type="common">Mouse</name>
    <dbReference type="NCBI Taxonomy" id="10090"/>
    <lineage>
        <taxon>Eukaryota</taxon>
        <taxon>Metazoa</taxon>
        <taxon>Chordata</taxon>
        <taxon>Craniata</taxon>
        <taxon>Vertebrata</taxon>
        <taxon>Euteleostomi</taxon>
        <taxon>Mammalia</taxon>
        <taxon>Eutheria</taxon>
        <taxon>Euarchontoglires</taxon>
        <taxon>Glires</taxon>
        <taxon>Rodentia</taxon>
        <taxon>Myomorpha</taxon>
        <taxon>Muroidea</taxon>
        <taxon>Muridae</taxon>
        <taxon>Murinae</taxon>
        <taxon>Mus</taxon>
        <taxon>Mus</taxon>
    </lineage>
</organism>
<name>ZNF76_MOUSE</name>
<proteinExistence type="evidence at transcript level"/>
<comment type="function">
    <text>May be involved in transcriptional regulation.</text>
</comment>
<comment type="subcellular location">
    <subcellularLocation>
        <location evidence="5">Nucleus</location>
    </subcellularLocation>
</comment>
<comment type="alternative products">
    <event type="alternative splicing"/>
    <isoform>
        <id>Q8BMU0-1</id>
        <name>1</name>
        <sequence type="displayed"/>
    </isoform>
    <isoform>
        <id>Q8BMU0-2</id>
        <name>2</name>
        <sequence type="described" ref="VSP_035628 VSP_035629"/>
    </isoform>
</comment>
<comment type="similarity">
    <text evidence="5">Belongs to the krueppel C2H2-type zinc-finger protein family.</text>
</comment>
<accession>Q8BMU0</accession>
<accession>Q6P9T2</accession>
<sequence length="568" mass="61454">MESLGLQTVRLSDGTTAYVQQAVKGEKLLEGQVIQLEDGTTAYIHQVTIQKESFSFEDGQPVQLEDGSMAYIHHTPKEGCDPSALEAVQLEDGSTAYIHHPVPVPSDSAILAVQTEAGLEDLAAEDEEGFGTDTVVALEQYASKVLHDSPASHNGKGQQVGDRAFRCGYKGCGRLYTTAHHLKVHERAHTGDRPYRCDFPSCGKAFATGYGLKSHVRTHTGEKPYKCPEELCSKAFKTSGDLQKHVRTHTGERPFRCPFEGCGRSFTTSNIRKVHVRTHTGERPYTCPEPHCGRGFTSATNYKNHVRIHTGEKPYVCTVPGCGKRFTEYSSLYKHHVVHTHCKPYTCSSCGKTYRQTSTLAMHKRSAHGELEATEESEQALYEQQQLEAASAAEESPPPKPTHIAYLSEVKEESSAIPTQVAMVTEEDGPPQVALITQDGTQQVSLSPEDLQALGSAISVVTQHGSTTLTIPGHHEELATSGTHTVTMVSADGTQTQPVTIITSGALVTEDSSVASLHHQQVALLATANGTHIAVQLEDQQTLEEAISVATAAMQQGAVTLETTESGC</sequence>